<proteinExistence type="inferred from homology"/>
<evidence type="ECO:0000255" key="1">
    <source>
        <dbReference type="HAMAP-Rule" id="MF_00664"/>
    </source>
</evidence>
<comment type="function">
    <text evidence="1">Catalyzes the formation of phosphatidylethanolamine (PtdEtn) from phosphatidylserine (PtdSer).</text>
</comment>
<comment type="catalytic activity">
    <reaction evidence="1">
        <text>a 1,2-diacyl-sn-glycero-3-phospho-L-serine + H(+) = a 1,2-diacyl-sn-glycero-3-phosphoethanolamine + CO2</text>
        <dbReference type="Rhea" id="RHEA:20828"/>
        <dbReference type="ChEBI" id="CHEBI:15378"/>
        <dbReference type="ChEBI" id="CHEBI:16526"/>
        <dbReference type="ChEBI" id="CHEBI:57262"/>
        <dbReference type="ChEBI" id="CHEBI:64612"/>
        <dbReference type="EC" id="4.1.1.65"/>
    </reaction>
</comment>
<comment type="cofactor">
    <cofactor evidence="1">
        <name>pyruvate</name>
        <dbReference type="ChEBI" id="CHEBI:15361"/>
    </cofactor>
    <text evidence="1">Binds 1 pyruvoyl group covalently per subunit.</text>
</comment>
<comment type="pathway">
    <text evidence="1">Phospholipid metabolism; phosphatidylethanolamine biosynthesis; phosphatidylethanolamine from CDP-diacylglycerol: step 2/2.</text>
</comment>
<comment type="subunit">
    <text evidence="1">Heterodimer of a large membrane-associated beta subunit and a small pyruvoyl-containing alpha subunit.</text>
</comment>
<comment type="subcellular location">
    <subcellularLocation>
        <location evidence="1">Cell membrane</location>
        <topology evidence="1">Peripheral membrane protein</topology>
    </subcellularLocation>
</comment>
<comment type="PTM">
    <text evidence="1">Is synthesized initially as an inactive proenzyme. Formation of the active enzyme involves a self-maturation process in which the active site pyruvoyl group is generated from an internal serine residue via an autocatalytic post-translational modification. Two non-identical subunits are generated from the proenzyme in this reaction, and the pyruvate is formed at the N-terminus of the alpha chain, which is derived from the carboxyl end of the proenzyme. The post-translation cleavage follows an unusual pathway, termed non-hydrolytic serinolysis, in which the side chain hydroxyl group of the serine supplies its oxygen atom to form the C-terminus of the beta chain, while the remainder of the serine residue undergoes an oxidative deamination to produce ammonia and the pyruvoyl prosthetic group on the alpha chain.</text>
</comment>
<comment type="similarity">
    <text evidence="1">Belongs to the phosphatidylserine decarboxylase family. PSD-A subfamily.</text>
</comment>
<feature type="chain" id="PRO_1000026634" description="Phosphatidylserine decarboxylase beta chain" evidence="1">
    <location>
        <begin position="1"/>
        <end position="181"/>
    </location>
</feature>
<feature type="chain" id="PRO_1000026635" description="Phosphatidylserine decarboxylase alpha chain" evidence="1">
    <location>
        <begin position="182"/>
        <end position="214"/>
    </location>
</feature>
<feature type="active site" description="Schiff-base intermediate with substrate; via pyruvic acid" evidence="1">
    <location>
        <position position="182"/>
    </location>
</feature>
<feature type="site" description="Cleavage (non-hydrolytic); by autocatalysis" evidence="1">
    <location>
        <begin position="181"/>
        <end position="182"/>
    </location>
</feature>
<feature type="modified residue" description="Pyruvic acid (Ser); by autocatalysis" evidence="1">
    <location>
        <position position="182"/>
    </location>
</feature>
<dbReference type="EC" id="4.1.1.65" evidence="1"/>
<dbReference type="EMBL" id="CP000440">
    <property type="protein sequence ID" value="ABI87856.1"/>
    <property type="molecule type" value="Genomic_DNA"/>
</dbReference>
<dbReference type="RefSeq" id="WP_006750447.1">
    <property type="nucleotide sequence ID" value="NZ_CP009798.1"/>
</dbReference>
<dbReference type="SMR" id="Q0BDB7"/>
<dbReference type="KEGG" id="bam:Bamb_2300"/>
<dbReference type="PATRIC" id="fig|339670.21.peg.2627"/>
<dbReference type="eggNOG" id="COG0688">
    <property type="taxonomic scope" value="Bacteria"/>
</dbReference>
<dbReference type="UniPathway" id="UPA00558">
    <property type="reaction ID" value="UER00616"/>
</dbReference>
<dbReference type="Proteomes" id="UP000000662">
    <property type="component" value="Chromosome 1"/>
</dbReference>
<dbReference type="GO" id="GO:0005886">
    <property type="term" value="C:plasma membrane"/>
    <property type="evidence" value="ECO:0007669"/>
    <property type="project" value="UniProtKB-SubCell"/>
</dbReference>
<dbReference type="GO" id="GO:0004609">
    <property type="term" value="F:phosphatidylserine decarboxylase activity"/>
    <property type="evidence" value="ECO:0007669"/>
    <property type="project" value="UniProtKB-UniRule"/>
</dbReference>
<dbReference type="GO" id="GO:0006646">
    <property type="term" value="P:phosphatidylethanolamine biosynthetic process"/>
    <property type="evidence" value="ECO:0007669"/>
    <property type="project" value="UniProtKB-UniRule"/>
</dbReference>
<dbReference type="HAMAP" id="MF_00664">
    <property type="entry name" value="PS_decarb_PSD_A"/>
    <property type="match status" value="1"/>
</dbReference>
<dbReference type="InterPro" id="IPR003817">
    <property type="entry name" value="PS_Dcarbxylase"/>
</dbReference>
<dbReference type="InterPro" id="IPR033175">
    <property type="entry name" value="PSD-A"/>
</dbReference>
<dbReference type="NCBIfam" id="TIGR00164">
    <property type="entry name" value="AS_decarb"/>
    <property type="match status" value="1"/>
</dbReference>
<dbReference type="NCBIfam" id="NF003678">
    <property type="entry name" value="PRK05305.1-2"/>
    <property type="match status" value="1"/>
</dbReference>
<dbReference type="NCBIfam" id="NF003680">
    <property type="entry name" value="PRK05305.1-5"/>
    <property type="match status" value="1"/>
</dbReference>
<dbReference type="NCBIfam" id="NF003685">
    <property type="entry name" value="PRK05305.2-5"/>
    <property type="match status" value="1"/>
</dbReference>
<dbReference type="PANTHER" id="PTHR35809">
    <property type="entry name" value="ARCHAETIDYLSERINE DECARBOXYLASE PROENZYME-RELATED"/>
    <property type="match status" value="1"/>
</dbReference>
<dbReference type="PANTHER" id="PTHR35809:SF1">
    <property type="entry name" value="ARCHAETIDYLSERINE DECARBOXYLASE PROENZYME-RELATED"/>
    <property type="match status" value="1"/>
</dbReference>
<dbReference type="Pfam" id="PF02666">
    <property type="entry name" value="PS_Dcarbxylase"/>
    <property type="match status" value="1"/>
</dbReference>
<reference key="1">
    <citation type="submission" date="2006-08" db="EMBL/GenBank/DDBJ databases">
        <title>Complete sequence of chromosome 1 of Burkholderia cepacia AMMD.</title>
        <authorList>
            <person name="Copeland A."/>
            <person name="Lucas S."/>
            <person name="Lapidus A."/>
            <person name="Barry K."/>
            <person name="Detter J.C."/>
            <person name="Glavina del Rio T."/>
            <person name="Hammon N."/>
            <person name="Israni S."/>
            <person name="Pitluck S."/>
            <person name="Bruce D."/>
            <person name="Chain P."/>
            <person name="Malfatti S."/>
            <person name="Shin M."/>
            <person name="Vergez L."/>
            <person name="Schmutz J."/>
            <person name="Larimer F."/>
            <person name="Land M."/>
            <person name="Hauser L."/>
            <person name="Kyrpides N."/>
            <person name="Kim E."/>
            <person name="Parke J."/>
            <person name="Coenye T."/>
            <person name="Konstantinidis K."/>
            <person name="Ramette A."/>
            <person name="Tiedje J."/>
            <person name="Richardson P."/>
        </authorList>
    </citation>
    <scope>NUCLEOTIDE SEQUENCE [LARGE SCALE GENOMIC DNA]</scope>
    <source>
        <strain>ATCC BAA-244 / DSM 16087 / CCUG 44356 / LMG 19182 / AMMD</strain>
    </source>
</reference>
<sequence length="214" mass="23474">MNYPHPIIAREGWPFIAIAAVIALLIHAVGGFGFAWPFWLLLVFVVQFFRDPQRPIPAQPNAVLCPADGRIVAVETTQDPYANREALKISVFMNVFNVHSQRSPVDGAVTKVEYFPGAFLNAAIDKASTENERNALVIQTASGKTVTAVQIAGLVARRILCYVRAGEPLSRGQRYGFIRFGSRVDVYLPLGSRAKVSIGEKVYASSTILAELEQ</sequence>
<name>PSD_BURCM</name>
<gene>
    <name evidence="1" type="primary">psd</name>
    <name type="ordered locus">Bamb_2300</name>
</gene>
<protein>
    <recommendedName>
        <fullName evidence="1">Phosphatidylserine decarboxylase proenzyme</fullName>
        <ecNumber evidence="1">4.1.1.65</ecNumber>
    </recommendedName>
    <component>
        <recommendedName>
            <fullName evidence="1">Phosphatidylserine decarboxylase alpha chain</fullName>
        </recommendedName>
    </component>
    <component>
        <recommendedName>
            <fullName evidence="1">Phosphatidylserine decarboxylase beta chain</fullName>
        </recommendedName>
    </component>
</protein>
<accession>Q0BDB7</accession>
<keyword id="KW-1003">Cell membrane</keyword>
<keyword id="KW-0210">Decarboxylase</keyword>
<keyword id="KW-0444">Lipid biosynthesis</keyword>
<keyword id="KW-0443">Lipid metabolism</keyword>
<keyword id="KW-0456">Lyase</keyword>
<keyword id="KW-0472">Membrane</keyword>
<keyword id="KW-0594">Phospholipid biosynthesis</keyword>
<keyword id="KW-1208">Phospholipid metabolism</keyword>
<keyword id="KW-0670">Pyruvate</keyword>
<keyword id="KW-0865">Zymogen</keyword>
<organism>
    <name type="scientific">Burkholderia ambifaria (strain ATCC BAA-244 / DSM 16087 / CCUG 44356 / LMG 19182 / AMMD)</name>
    <name type="common">Burkholderia cepacia (strain AMMD)</name>
    <dbReference type="NCBI Taxonomy" id="339670"/>
    <lineage>
        <taxon>Bacteria</taxon>
        <taxon>Pseudomonadati</taxon>
        <taxon>Pseudomonadota</taxon>
        <taxon>Betaproteobacteria</taxon>
        <taxon>Burkholderiales</taxon>
        <taxon>Burkholderiaceae</taxon>
        <taxon>Burkholderia</taxon>
        <taxon>Burkholderia cepacia complex</taxon>
    </lineage>
</organism>